<protein>
    <recommendedName>
        <fullName>Non-structural protein NS1</fullName>
    </recommendedName>
    <alternativeName>
        <fullName>Hydrophobic tubular protein</fullName>
    </alternativeName>
</protein>
<evidence type="ECO:0000305" key="1"/>
<dbReference type="EMBL" id="M69085">
    <property type="protein sequence ID" value="AAA43000.1"/>
    <property type="molecule type" value="Genomic_RNA"/>
</dbReference>
<dbReference type="EMBL" id="X59000">
    <property type="protein sequence ID" value="CAA41746.1"/>
    <property type="molecule type" value="Genomic_RNA"/>
</dbReference>
<dbReference type="SMR" id="P27585"/>
<dbReference type="InterPro" id="IPR002630">
    <property type="entry name" value="Orbi_NS1"/>
</dbReference>
<dbReference type="Pfam" id="PF01718">
    <property type="entry name" value="Orbi_NS1"/>
    <property type="match status" value="1"/>
</dbReference>
<proteinExistence type="inferred from homology"/>
<name>VNS1_EHDV2</name>
<sequence length="552" mass="64554">MERFLRKFNMNSYYANHVKMFQALSPQWTCSHLRRNCLFDGVCAKQHFEEVMNRITERNDAHAAYRLAEMAQITMLDREKVWLQCYKSFSEPYDENIAEKIQICGRELLDKYKNSDMVTKIDNMIKFDPTRIVLDDNFSAFPYLYIPVNYGQMVQPIRIMRYRQIGYCFYQPDAVDDWIAPDIYPMRRPRMEMCRQVKEAVGSCSFTGFSGPVFQIMFFPMQMLPYMENEGFAKIINRYAQMAVQAIFTSRLHRGERYVTQLFGECPAGEFPMHHMMLRRWEGNGRPQTLVQMRHTIAGNKEWQTWLLPMILVRIAVREPANFEYVRGFMQGRHKCQLCFLKNGCDRETFYHIDVRTSEIVGCSTVTQVMIGEHVDISLPVQKIKLTGTEHLGRASDHYFKYNATTGMEALIRTAIQIHRWIRGTGIWENDEWQEGIYLLARVLLRWELSTQARSIMFRLFCFVCFGYAPRKDGTVPDWKDLGAFLDIILNGTELGDDEDETGQTGIMFELSRCVMTLAYAERIKVVTFNAPECDEGAVMNIAQAMANMWDN</sequence>
<gene>
    <name type="primary">Segment-5</name>
</gene>
<accession>P27585</accession>
<feature type="chain" id="PRO_0000222673" description="Non-structural protein NS1">
    <location>
        <begin position="1"/>
        <end position="552"/>
    </location>
</feature>
<organism>
    <name type="scientific">Epizootic hemorrhagic disease virus 2 (strain Alberta)</name>
    <name type="common">EHDV-2</name>
    <dbReference type="NCBI Taxonomy" id="10910"/>
    <lineage>
        <taxon>Viruses</taxon>
        <taxon>Riboviria</taxon>
        <taxon>Orthornavirae</taxon>
        <taxon>Duplornaviricota</taxon>
        <taxon>Resentoviricetes</taxon>
        <taxon>Reovirales</taxon>
        <taxon>Sedoreoviridae</taxon>
        <taxon>Orbivirus</taxon>
        <taxon>Epizootic hemorrhagic disease virus</taxon>
    </lineage>
</organism>
<reference key="1">
    <citation type="journal article" date="1991" name="Virus Res.">
        <title>A characterization of the nonstructural protein from which the virus-specified tubules in epizootic haemorrhagic disease virus-infected cells are composed.</title>
        <authorList>
            <person name="Nel L.H."/>
            <person name="Picard L.A."/>
            <person name="Huismans H."/>
        </authorList>
    </citation>
    <scope>NUCLEOTIDE SEQUENCE [GENOMIC RNA]</scope>
</reference>
<organismHost>
    <name type="scientific">Antilocapra americana</name>
    <name type="common">Pronghorn</name>
    <dbReference type="NCBI Taxonomy" id="9891"/>
</organismHost>
<organismHost>
    <name type="scientific">Odocoileus hemionus</name>
    <name type="common">Mule deer</name>
    <name type="synonym">Cervus hemionus</name>
    <dbReference type="NCBI Taxonomy" id="9872"/>
</organismHost>
<organismHost>
    <name type="scientific">Odocoileus virginianus</name>
    <name type="common">White-tailed deer</name>
    <dbReference type="NCBI Taxonomy" id="9874"/>
</organismHost>
<comment type="similarity">
    <text evidence="1">Belongs to the orbivirus non-structural protein NS1 family.</text>
</comment>